<gene>
    <name type="primary">ihfA</name>
    <name type="synonym">himA</name>
    <name type="ordered locus">STY1771</name>
    <name type="ordered locus">t1220</name>
</gene>
<evidence type="ECO:0000250" key="1"/>
<evidence type="ECO:0000256" key="2">
    <source>
        <dbReference type="SAM" id="MobiDB-lite"/>
    </source>
</evidence>
<evidence type="ECO:0000305" key="3"/>
<accession>P0A1S1</accession>
<accession>P15430</accession>
<dbReference type="EMBL" id="AL513382">
    <property type="protein sequence ID" value="CAD02013.1"/>
    <property type="molecule type" value="Genomic_DNA"/>
</dbReference>
<dbReference type="EMBL" id="AE014613">
    <property type="protein sequence ID" value="AAO68875.1"/>
    <property type="molecule type" value="Genomic_DNA"/>
</dbReference>
<dbReference type="RefSeq" id="NP_456172.1">
    <property type="nucleotide sequence ID" value="NC_003198.1"/>
</dbReference>
<dbReference type="RefSeq" id="WP_001229266.1">
    <property type="nucleotide sequence ID" value="NZ_WSUR01000011.1"/>
</dbReference>
<dbReference type="SMR" id="P0A1S1"/>
<dbReference type="STRING" id="220341.gene:17585705"/>
<dbReference type="GeneID" id="92828695"/>
<dbReference type="KEGG" id="stt:t1220"/>
<dbReference type="KEGG" id="sty:STY1771"/>
<dbReference type="PATRIC" id="fig|220341.7.peg.1783"/>
<dbReference type="eggNOG" id="COG0776">
    <property type="taxonomic scope" value="Bacteria"/>
</dbReference>
<dbReference type="HOGENOM" id="CLU_105066_1_3_6"/>
<dbReference type="OMA" id="EMLFDQV"/>
<dbReference type="OrthoDB" id="9797747at2"/>
<dbReference type="Proteomes" id="UP000000541">
    <property type="component" value="Chromosome"/>
</dbReference>
<dbReference type="Proteomes" id="UP000002670">
    <property type="component" value="Chromosome"/>
</dbReference>
<dbReference type="GO" id="GO:0005829">
    <property type="term" value="C:cytosol"/>
    <property type="evidence" value="ECO:0007669"/>
    <property type="project" value="TreeGrafter"/>
</dbReference>
<dbReference type="GO" id="GO:0003677">
    <property type="term" value="F:DNA binding"/>
    <property type="evidence" value="ECO:0007669"/>
    <property type="project" value="UniProtKB-UniRule"/>
</dbReference>
<dbReference type="GO" id="GO:0030527">
    <property type="term" value="F:structural constituent of chromatin"/>
    <property type="evidence" value="ECO:0007669"/>
    <property type="project" value="InterPro"/>
</dbReference>
<dbReference type="GO" id="GO:0006310">
    <property type="term" value="P:DNA recombination"/>
    <property type="evidence" value="ECO:0007669"/>
    <property type="project" value="UniProtKB-UniRule"/>
</dbReference>
<dbReference type="GO" id="GO:0009893">
    <property type="term" value="P:positive regulation of metabolic process"/>
    <property type="evidence" value="ECO:0007669"/>
    <property type="project" value="UniProtKB-ARBA"/>
</dbReference>
<dbReference type="GO" id="GO:0006355">
    <property type="term" value="P:regulation of DNA-templated transcription"/>
    <property type="evidence" value="ECO:0007669"/>
    <property type="project" value="UniProtKB-UniRule"/>
</dbReference>
<dbReference type="GO" id="GO:0006417">
    <property type="term" value="P:regulation of translation"/>
    <property type="evidence" value="ECO:0007669"/>
    <property type="project" value="UniProtKB-UniRule"/>
</dbReference>
<dbReference type="CDD" id="cd13835">
    <property type="entry name" value="IHF_A"/>
    <property type="match status" value="1"/>
</dbReference>
<dbReference type="FunFam" id="4.10.520.10:FF:000002">
    <property type="entry name" value="Integration host factor subunit alpha"/>
    <property type="match status" value="1"/>
</dbReference>
<dbReference type="Gene3D" id="4.10.520.10">
    <property type="entry name" value="IHF-like DNA-binding proteins"/>
    <property type="match status" value="1"/>
</dbReference>
<dbReference type="HAMAP" id="MF_00380">
    <property type="entry name" value="IHF_alpha"/>
    <property type="match status" value="1"/>
</dbReference>
<dbReference type="InterPro" id="IPR000119">
    <property type="entry name" value="Hist_DNA-bd"/>
</dbReference>
<dbReference type="InterPro" id="IPR020816">
    <property type="entry name" value="Histone-like_DNA-bd_CS"/>
</dbReference>
<dbReference type="InterPro" id="IPR010992">
    <property type="entry name" value="IHF-like_DNA-bd_dom_sf"/>
</dbReference>
<dbReference type="InterPro" id="IPR005684">
    <property type="entry name" value="IHF_alpha"/>
</dbReference>
<dbReference type="NCBIfam" id="TIGR00987">
    <property type="entry name" value="himA"/>
    <property type="match status" value="1"/>
</dbReference>
<dbReference type="NCBIfam" id="NF001401">
    <property type="entry name" value="PRK00285.1"/>
    <property type="match status" value="1"/>
</dbReference>
<dbReference type="PANTHER" id="PTHR33175">
    <property type="entry name" value="DNA-BINDING PROTEIN HU"/>
    <property type="match status" value="1"/>
</dbReference>
<dbReference type="PANTHER" id="PTHR33175:SF2">
    <property type="entry name" value="INTEGRATION HOST FACTOR SUBUNIT ALPHA"/>
    <property type="match status" value="1"/>
</dbReference>
<dbReference type="Pfam" id="PF00216">
    <property type="entry name" value="Bac_DNA_binding"/>
    <property type="match status" value="1"/>
</dbReference>
<dbReference type="PRINTS" id="PR01727">
    <property type="entry name" value="DNABINDINGHU"/>
</dbReference>
<dbReference type="SMART" id="SM00411">
    <property type="entry name" value="BHL"/>
    <property type="match status" value="1"/>
</dbReference>
<dbReference type="SUPFAM" id="SSF47729">
    <property type="entry name" value="IHF-like DNA-binding proteins"/>
    <property type="match status" value="1"/>
</dbReference>
<dbReference type="PROSITE" id="PS00045">
    <property type="entry name" value="HISTONE_LIKE"/>
    <property type="match status" value="1"/>
</dbReference>
<sequence length="99" mass="11368">MALTKAEMSEYLFDKLGLSKRDAKELVELFFEEIRRALENGEQVKLSGFGNFDLRDKNQRPGRNPKTGEDIPITARRVVTFRPGQKLKSRVENASPKEE</sequence>
<protein>
    <recommendedName>
        <fullName>Integration host factor subunit alpha</fullName>
        <shortName>IHF-alpha</shortName>
    </recommendedName>
</protein>
<name>IHFA_SALTI</name>
<keyword id="KW-0233">DNA recombination</keyword>
<keyword id="KW-0238">DNA-binding</keyword>
<keyword id="KW-0804">Transcription</keyword>
<keyword id="KW-0805">Transcription regulation</keyword>
<keyword id="KW-0810">Translation regulation</keyword>
<organism>
    <name type="scientific">Salmonella typhi</name>
    <dbReference type="NCBI Taxonomy" id="90370"/>
    <lineage>
        <taxon>Bacteria</taxon>
        <taxon>Pseudomonadati</taxon>
        <taxon>Pseudomonadota</taxon>
        <taxon>Gammaproteobacteria</taxon>
        <taxon>Enterobacterales</taxon>
        <taxon>Enterobacteriaceae</taxon>
        <taxon>Salmonella</taxon>
    </lineage>
</organism>
<reference key="1">
    <citation type="journal article" date="2001" name="Nature">
        <title>Complete genome sequence of a multiple drug resistant Salmonella enterica serovar Typhi CT18.</title>
        <authorList>
            <person name="Parkhill J."/>
            <person name="Dougan G."/>
            <person name="James K.D."/>
            <person name="Thomson N.R."/>
            <person name="Pickard D."/>
            <person name="Wain J."/>
            <person name="Churcher C.M."/>
            <person name="Mungall K.L."/>
            <person name="Bentley S.D."/>
            <person name="Holden M.T.G."/>
            <person name="Sebaihia M."/>
            <person name="Baker S."/>
            <person name="Basham D."/>
            <person name="Brooks K."/>
            <person name="Chillingworth T."/>
            <person name="Connerton P."/>
            <person name="Cronin A."/>
            <person name="Davis P."/>
            <person name="Davies R.M."/>
            <person name="Dowd L."/>
            <person name="White N."/>
            <person name="Farrar J."/>
            <person name="Feltwell T."/>
            <person name="Hamlin N."/>
            <person name="Haque A."/>
            <person name="Hien T.T."/>
            <person name="Holroyd S."/>
            <person name="Jagels K."/>
            <person name="Krogh A."/>
            <person name="Larsen T.S."/>
            <person name="Leather S."/>
            <person name="Moule S."/>
            <person name="O'Gaora P."/>
            <person name="Parry C."/>
            <person name="Quail M.A."/>
            <person name="Rutherford K.M."/>
            <person name="Simmonds M."/>
            <person name="Skelton J."/>
            <person name="Stevens K."/>
            <person name="Whitehead S."/>
            <person name="Barrell B.G."/>
        </authorList>
    </citation>
    <scope>NUCLEOTIDE SEQUENCE [LARGE SCALE GENOMIC DNA]</scope>
    <source>
        <strain>CT18</strain>
    </source>
</reference>
<reference key="2">
    <citation type="journal article" date="2003" name="J. Bacteriol.">
        <title>Comparative genomics of Salmonella enterica serovar Typhi strains Ty2 and CT18.</title>
        <authorList>
            <person name="Deng W."/>
            <person name="Liou S.-R."/>
            <person name="Plunkett G. III"/>
            <person name="Mayhew G.F."/>
            <person name="Rose D.J."/>
            <person name="Burland V."/>
            <person name="Kodoyianni V."/>
            <person name="Schwartz D.C."/>
            <person name="Blattner F.R."/>
        </authorList>
    </citation>
    <scope>NUCLEOTIDE SEQUENCE [LARGE SCALE GENOMIC DNA]</scope>
    <source>
        <strain>ATCC 700931 / Ty2</strain>
    </source>
</reference>
<feature type="chain" id="PRO_0000105025" description="Integration host factor subunit alpha">
    <location>
        <begin position="1"/>
        <end position="99"/>
    </location>
</feature>
<feature type="region of interest" description="Disordered" evidence="2">
    <location>
        <begin position="49"/>
        <end position="75"/>
    </location>
</feature>
<comment type="function">
    <text evidence="1">This protein is one of the two subunits of integration host factor, a specific DNA-binding protein that functions in genetic recombination as well as in transcriptional and translational control.</text>
</comment>
<comment type="function">
    <text evidence="1">IHF also plays a crucial role in the lysogenic life cycle of bacteriophage lambda, as it is required not only in the recombination reaction, which inserts lambda DNA into the E.coli chromosome, but also for the synthesis of int and cI repressor, two phage proteins necessary for DNA insertion and repression, respectively. The synthesis of int and cI proteins is regulated indirectly by IHF via translational control of the lambda cII protein (By similarity).</text>
</comment>
<comment type="subunit">
    <text evidence="1">Heterodimer of an alpha and a beta chain.</text>
</comment>
<comment type="similarity">
    <text evidence="3">Belongs to the bacterial histone-like protein family.</text>
</comment>
<proteinExistence type="inferred from homology"/>